<protein>
    <recommendedName>
        <fullName>Dihydropteroate synthase</fullName>
        <shortName>DHPS</shortName>
        <ecNumber>2.5.1.15</ecNumber>
    </recommendedName>
    <alternativeName>
        <fullName>Dihydropteroate pyrophosphorylase</fullName>
    </alternativeName>
</protein>
<gene>
    <name type="primary">sul</name>
    <name type="ordered locus">BSU00770</name>
</gene>
<dbReference type="EC" id="2.5.1.15"/>
<dbReference type="EMBL" id="M34053">
    <property type="protein sequence ID" value="AAA22697.1"/>
    <property type="molecule type" value="Genomic_DNA"/>
</dbReference>
<dbReference type="EMBL" id="D26185">
    <property type="protein sequence ID" value="BAA05312.1"/>
    <property type="molecule type" value="Genomic_DNA"/>
</dbReference>
<dbReference type="EMBL" id="AL009126">
    <property type="protein sequence ID" value="CAB11853.1"/>
    <property type="molecule type" value="Genomic_DNA"/>
</dbReference>
<dbReference type="PIR" id="G69719">
    <property type="entry name" value="G69719"/>
</dbReference>
<dbReference type="SMR" id="P28822"/>
<dbReference type="FunCoup" id="P28822">
    <property type="interactions" value="545"/>
</dbReference>
<dbReference type="STRING" id="224308.BSU00770"/>
<dbReference type="PaxDb" id="224308-BSU00770"/>
<dbReference type="EnsemblBacteria" id="CAB11853">
    <property type="protein sequence ID" value="CAB11853"/>
    <property type="gene ID" value="BSU_00770"/>
</dbReference>
<dbReference type="GeneID" id="936256"/>
<dbReference type="KEGG" id="bsu:BSU00770"/>
<dbReference type="PATRIC" id="fig|224308.179.peg.77"/>
<dbReference type="eggNOG" id="COG0294">
    <property type="taxonomic scope" value="Bacteria"/>
</dbReference>
<dbReference type="InParanoid" id="P28822"/>
<dbReference type="OrthoDB" id="9811744at2"/>
<dbReference type="PhylomeDB" id="P28822"/>
<dbReference type="BioCyc" id="BSUB:BSU00770-MONOMER"/>
<dbReference type="UniPathway" id="UPA00077">
    <property type="reaction ID" value="UER00156"/>
</dbReference>
<dbReference type="Proteomes" id="UP000001570">
    <property type="component" value="Chromosome"/>
</dbReference>
<dbReference type="GO" id="GO:0005829">
    <property type="term" value="C:cytosol"/>
    <property type="evidence" value="ECO:0000318"/>
    <property type="project" value="GO_Central"/>
</dbReference>
<dbReference type="GO" id="GO:0004156">
    <property type="term" value="F:dihydropteroate synthase activity"/>
    <property type="evidence" value="ECO:0000318"/>
    <property type="project" value="GO_Central"/>
</dbReference>
<dbReference type="GO" id="GO:0046872">
    <property type="term" value="F:metal ion binding"/>
    <property type="evidence" value="ECO:0007669"/>
    <property type="project" value="UniProtKB-KW"/>
</dbReference>
<dbReference type="GO" id="GO:0046656">
    <property type="term" value="P:folic acid biosynthetic process"/>
    <property type="evidence" value="ECO:0007669"/>
    <property type="project" value="UniProtKB-KW"/>
</dbReference>
<dbReference type="GO" id="GO:0046654">
    <property type="term" value="P:tetrahydrofolate biosynthetic process"/>
    <property type="evidence" value="ECO:0000318"/>
    <property type="project" value="GO_Central"/>
</dbReference>
<dbReference type="CDD" id="cd00739">
    <property type="entry name" value="DHPS"/>
    <property type="match status" value="1"/>
</dbReference>
<dbReference type="FunFam" id="3.20.20.20:FF:000006">
    <property type="entry name" value="Dihydropteroate synthase"/>
    <property type="match status" value="1"/>
</dbReference>
<dbReference type="Gene3D" id="3.20.20.20">
    <property type="entry name" value="Dihydropteroate synthase-like"/>
    <property type="match status" value="1"/>
</dbReference>
<dbReference type="InterPro" id="IPR045031">
    <property type="entry name" value="DHP_synth-like"/>
</dbReference>
<dbReference type="InterPro" id="IPR006390">
    <property type="entry name" value="DHP_synth_dom"/>
</dbReference>
<dbReference type="InterPro" id="IPR011005">
    <property type="entry name" value="Dihydropteroate_synth-like_sf"/>
</dbReference>
<dbReference type="InterPro" id="IPR000489">
    <property type="entry name" value="Pterin-binding_dom"/>
</dbReference>
<dbReference type="NCBIfam" id="TIGR01496">
    <property type="entry name" value="DHPS"/>
    <property type="match status" value="1"/>
</dbReference>
<dbReference type="PANTHER" id="PTHR20941">
    <property type="entry name" value="FOLATE SYNTHESIS PROTEINS"/>
    <property type="match status" value="1"/>
</dbReference>
<dbReference type="PANTHER" id="PTHR20941:SF1">
    <property type="entry name" value="FOLIC ACID SYNTHESIS PROTEIN FOL1"/>
    <property type="match status" value="1"/>
</dbReference>
<dbReference type="Pfam" id="PF00809">
    <property type="entry name" value="Pterin_bind"/>
    <property type="match status" value="1"/>
</dbReference>
<dbReference type="SUPFAM" id="SSF51717">
    <property type="entry name" value="Dihydropteroate synthetase-like"/>
    <property type="match status" value="1"/>
</dbReference>
<dbReference type="PROSITE" id="PS00792">
    <property type="entry name" value="DHPS_1"/>
    <property type="match status" value="1"/>
</dbReference>
<dbReference type="PROSITE" id="PS00793">
    <property type="entry name" value="DHPS_2"/>
    <property type="match status" value="1"/>
</dbReference>
<dbReference type="PROSITE" id="PS50972">
    <property type="entry name" value="PTERIN_BINDING"/>
    <property type="match status" value="1"/>
</dbReference>
<accession>P28822</accession>
<organism>
    <name type="scientific">Bacillus subtilis (strain 168)</name>
    <dbReference type="NCBI Taxonomy" id="224308"/>
    <lineage>
        <taxon>Bacteria</taxon>
        <taxon>Bacillati</taxon>
        <taxon>Bacillota</taxon>
        <taxon>Bacilli</taxon>
        <taxon>Bacillales</taxon>
        <taxon>Bacillaceae</taxon>
        <taxon>Bacillus</taxon>
    </lineage>
</organism>
<reference key="1">
    <citation type="journal article" date="1990" name="J. Bacteriol.">
        <title>An apparent Bacillus subtilis folic acid biosynthetic operon containing pab, an amphibolic trpG gene, a third gene required for synthesis of para-aminobenzoic acid, and the dihydropteroate synthase gene.</title>
        <authorList>
            <person name="Slock J."/>
            <person name="Stahly D.P."/>
            <person name="Han C.-Y."/>
            <person name="Six E.W."/>
            <person name="Crawford I.P."/>
        </authorList>
    </citation>
    <scope>NUCLEOTIDE SEQUENCE [GENOMIC DNA]</scope>
    <source>
        <strain>ASB342</strain>
    </source>
</reference>
<reference key="2">
    <citation type="journal article" date="1994" name="DNA Res.">
        <title>Systematic sequencing of the 180 kilobase region of the Bacillus subtilis chromosome containing the replication origin.</title>
        <authorList>
            <person name="Ogasawara N."/>
            <person name="Nakai S."/>
            <person name="Yoshikawa H."/>
        </authorList>
    </citation>
    <scope>NUCLEOTIDE SEQUENCE [GENOMIC DNA]</scope>
    <source>
        <strain>168</strain>
    </source>
</reference>
<reference key="3">
    <citation type="journal article" date="1997" name="Nature">
        <title>The complete genome sequence of the Gram-positive bacterium Bacillus subtilis.</title>
        <authorList>
            <person name="Kunst F."/>
            <person name="Ogasawara N."/>
            <person name="Moszer I."/>
            <person name="Albertini A.M."/>
            <person name="Alloni G."/>
            <person name="Azevedo V."/>
            <person name="Bertero M.G."/>
            <person name="Bessieres P."/>
            <person name="Bolotin A."/>
            <person name="Borchert S."/>
            <person name="Borriss R."/>
            <person name="Boursier L."/>
            <person name="Brans A."/>
            <person name="Braun M."/>
            <person name="Brignell S.C."/>
            <person name="Bron S."/>
            <person name="Brouillet S."/>
            <person name="Bruschi C.V."/>
            <person name="Caldwell B."/>
            <person name="Capuano V."/>
            <person name="Carter N.M."/>
            <person name="Choi S.-K."/>
            <person name="Codani J.-J."/>
            <person name="Connerton I.F."/>
            <person name="Cummings N.J."/>
            <person name="Daniel R.A."/>
            <person name="Denizot F."/>
            <person name="Devine K.M."/>
            <person name="Duesterhoeft A."/>
            <person name="Ehrlich S.D."/>
            <person name="Emmerson P.T."/>
            <person name="Entian K.-D."/>
            <person name="Errington J."/>
            <person name="Fabret C."/>
            <person name="Ferrari E."/>
            <person name="Foulger D."/>
            <person name="Fritz C."/>
            <person name="Fujita M."/>
            <person name="Fujita Y."/>
            <person name="Fuma S."/>
            <person name="Galizzi A."/>
            <person name="Galleron N."/>
            <person name="Ghim S.-Y."/>
            <person name="Glaser P."/>
            <person name="Goffeau A."/>
            <person name="Golightly E.J."/>
            <person name="Grandi G."/>
            <person name="Guiseppi G."/>
            <person name="Guy B.J."/>
            <person name="Haga K."/>
            <person name="Haiech J."/>
            <person name="Harwood C.R."/>
            <person name="Henaut A."/>
            <person name="Hilbert H."/>
            <person name="Holsappel S."/>
            <person name="Hosono S."/>
            <person name="Hullo M.-F."/>
            <person name="Itaya M."/>
            <person name="Jones L.-M."/>
            <person name="Joris B."/>
            <person name="Karamata D."/>
            <person name="Kasahara Y."/>
            <person name="Klaerr-Blanchard M."/>
            <person name="Klein C."/>
            <person name="Kobayashi Y."/>
            <person name="Koetter P."/>
            <person name="Koningstein G."/>
            <person name="Krogh S."/>
            <person name="Kumano M."/>
            <person name="Kurita K."/>
            <person name="Lapidus A."/>
            <person name="Lardinois S."/>
            <person name="Lauber J."/>
            <person name="Lazarevic V."/>
            <person name="Lee S.-M."/>
            <person name="Levine A."/>
            <person name="Liu H."/>
            <person name="Masuda S."/>
            <person name="Mauel C."/>
            <person name="Medigue C."/>
            <person name="Medina N."/>
            <person name="Mellado R.P."/>
            <person name="Mizuno M."/>
            <person name="Moestl D."/>
            <person name="Nakai S."/>
            <person name="Noback M."/>
            <person name="Noone D."/>
            <person name="O'Reilly M."/>
            <person name="Ogawa K."/>
            <person name="Ogiwara A."/>
            <person name="Oudega B."/>
            <person name="Park S.-H."/>
            <person name="Parro V."/>
            <person name="Pohl T.M."/>
            <person name="Portetelle D."/>
            <person name="Porwollik S."/>
            <person name="Prescott A.M."/>
            <person name="Presecan E."/>
            <person name="Pujic P."/>
            <person name="Purnelle B."/>
            <person name="Rapoport G."/>
            <person name="Rey M."/>
            <person name="Reynolds S."/>
            <person name="Rieger M."/>
            <person name="Rivolta C."/>
            <person name="Rocha E."/>
            <person name="Roche B."/>
            <person name="Rose M."/>
            <person name="Sadaie Y."/>
            <person name="Sato T."/>
            <person name="Scanlan E."/>
            <person name="Schleich S."/>
            <person name="Schroeter R."/>
            <person name="Scoffone F."/>
            <person name="Sekiguchi J."/>
            <person name="Sekowska A."/>
            <person name="Seror S.J."/>
            <person name="Serror P."/>
            <person name="Shin B.-S."/>
            <person name="Soldo B."/>
            <person name="Sorokin A."/>
            <person name="Tacconi E."/>
            <person name="Takagi T."/>
            <person name="Takahashi H."/>
            <person name="Takemaru K."/>
            <person name="Takeuchi M."/>
            <person name="Tamakoshi A."/>
            <person name="Tanaka T."/>
            <person name="Terpstra P."/>
            <person name="Tognoni A."/>
            <person name="Tosato V."/>
            <person name="Uchiyama S."/>
            <person name="Vandenbol M."/>
            <person name="Vannier F."/>
            <person name="Vassarotti A."/>
            <person name="Viari A."/>
            <person name="Wambutt R."/>
            <person name="Wedler E."/>
            <person name="Wedler H."/>
            <person name="Weitzenegger T."/>
            <person name="Winters P."/>
            <person name="Wipat A."/>
            <person name="Yamamoto H."/>
            <person name="Yamane K."/>
            <person name="Yasumoto K."/>
            <person name="Yata K."/>
            <person name="Yoshida K."/>
            <person name="Yoshikawa H.-F."/>
            <person name="Zumstein E."/>
            <person name="Yoshikawa H."/>
            <person name="Danchin A."/>
        </authorList>
    </citation>
    <scope>NUCLEOTIDE SEQUENCE [LARGE SCALE GENOMIC DNA]</scope>
    <source>
        <strain>168</strain>
    </source>
</reference>
<feature type="chain" id="PRO_0000168205" description="Dihydropteroate synthase">
    <location>
        <begin position="1"/>
        <end position="285"/>
    </location>
</feature>
<feature type="domain" description="Pterin-binding" evidence="3">
    <location>
        <begin position="25"/>
        <end position="271"/>
    </location>
</feature>
<feature type="binding site" evidence="2">
    <location>
        <position position="32"/>
    </location>
    <ligand>
        <name>Mg(2+)</name>
        <dbReference type="ChEBI" id="CHEBI:18420"/>
    </ligand>
</feature>
<feature type="binding site" evidence="1">
    <location>
        <position position="72"/>
    </location>
    <ligand>
        <name>(7,8-dihydropterin-6-yl)methyl diphosphate</name>
        <dbReference type="ChEBI" id="CHEBI:72950"/>
    </ligand>
</feature>
<feature type="binding site" evidence="1">
    <location>
        <position position="106"/>
    </location>
    <ligand>
        <name>(7,8-dihydropterin-6-yl)methyl diphosphate</name>
        <dbReference type="ChEBI" id="CHEBI:72950"/>
    </ligand>
</feature>
<feature type="binding site" evidence="1">
    <location>
        <position position="125"/>
    </location>
    <ligand>
        <name>(7,8-dihydropterin-6-yl)methyl diphosphate</name>
        <dbReference type="ChEBI" id="CHEBI:72950"/>
    </ligand>
</feature>
<feature type="binding site" evidence="1">
    <location>
        <position position="189"/>
    </location>
    <ligand>
        <name>(7,8-dihydropterin-6-yl)methyl diphosphate</name>
        <dbReference type="ChEBI" id="CHEBI:72950"/>
    </ligand>
</feature>
<feature type="binding site" evidence="1">
    <location>
        <position position="225"/>
    </location>
    <ligand>
        <name>(7,8-dihydropterin-6-yl)methyl diphosphate</name>
        <dbReference type="ChEBI" id="CHEBI:72950"/>
    </ligand>
</feature>
<feature type="binding site" evidence="1">
    <location>
        <begin position="259"/>
        <end position="261"/>
    </location>
    <ligand>
        <name>(7,8-dihydropterin-6-yl)methyl diphosphate</name>
        <dbReference type="ChEBI" id="CHEBI:72950"/>
    </ligand>
</feature>
<feature type="sequence conflict" description="In Ref. 1; AAA22697." evidence="4" ref="1">
    <original>A</original>
    <variation>P</variation>
    <location>
        <position position="195"/>
    </location>
</feature>
<evidence type="ECO:0000250" key="1">
    <source>
        <dbReference type="UniProtKB" id="P0AC13"/>
    </source>
</evidence>
<evidence type="ECO:0000250" key="2">
    <source>
        <dbReference type="UniProtKB" id="P9WND1"/>
    </source>
</evidence>
<evidence type="ECO:0000255" key="3">
    <source>
        <dbReference type="PROSITE-ProRule" id="PRU00334"/>
    </source>
</evidence>
<evidence type="ECO:0000305" key="4"/>
<keyword id="KW-0289">Folate biosynthesis</keyword>
<keyword id="KW-0460">Magnesium</keyword>
<keyword id="KW-0479">Metal-binding</keyword>
<keyword id="KW-1185">Reference proteome</keyword>
<keyword id="KW-0808">Transferase</keyword>
<sequence>MAQHTIDQTQVIHTKPSALSYKEKTLVMGILNVTPDSFSDGGKYDSLDKALLHAKEMIDDGAHIIDIGGESTRPGAECVSEDEEMSRVIPVIERITKELGVPISVDTYKASVADEAVKAGASIINDIWGAKHDPKMASVAAEHNVPIVLMHNRPERNYNDLLPDMLSDLMESVKIAVEAGVDEKNIILDPGIGFAKTYHDNLAVMNKLEIFSGLGYPVLLATSRKRFIGRVLDLPPEERAEGTGATVCLGIQKGCDIVRVHDVKQIARMAKMMDAMLNKGGVHHG</sequence>
<proteinExistence type="inferred from homology"/>
<name>DHPS_BACSU</name>
<comment type="function">
    <text evidence="1">Catalyzes the condensation of para-aminobenzoate (pABA) with 6-hydroxymethyl-7,8-dihydropterin diphosphate (DHPt-PP) to form 7,8-dihydropteroate (H2Pte), the immediate precursor of folate derivatives.</text>
</comment>
<comment type="catalytic activity">
    <reaction evidence="1">
        <text>(7,8-dihydropterin-6-yl)methyl diphosphate + 4-aminobenzoate = 7,8-dihydropteroate + diphosphate</text>
        <dbReference type="Rhea" id="RHEA:19949"/>
        <dbReference type="ChEBI" id="CHEBI:17836"/>
        <dbReference type="ChEBI" id="CHEBI:17839"/>
        <dbReference type="ChEBI" id="CHEBI:33019"/>
        <dbReference type="ChEBI" id="CHEBI:72950"/>
        <dbReference type="EC" id="2.5.1.15"/>
    </reaction>
</comment>
<comment type="cofactor">
    <cofactor evidence="1">
        <name>Mg(2+)</name>
        <dbReference type="ChEBI" id="CHEBI:18420"/>
    </cofactor>
</comment>
<comment type="pathway">
    <text>Cofactor biosynthesis; tetrahydrofolate biosynthesis; 7,8-dihydrofolate from 2-amino-4-hydroxy-6-hydroxymethyl-7,8-dihydropteridine diphosphate and 4-aminobenzoate: step 1/2.</text>
</comment>
<comment type="similarity">
    <text evidence="4">Belongs to the DHPS family.</text>
</comment>